<dbReference type="EMBL" id="AK012014">
    <property type="protein sequence ID" value="BAB27975.1"/>
    <property type="molecule type" value="mRNA"/>
</dbReference>
<dbReference type="EMBL" id="AK032897">
    <property type="protein sequence ID" value="BAC28076.1"/>
    <property type="molecule type" value="mRNA"/>
</dbReference>
<dbReference type="EMBL" id="AK048488">
    <property type="protein sequence ID" value="BAC33350.1"/>
    <property type="molecule type" value="mRNA"/>
</dbReference>
<dbReference type="EMBL" id="AK050391">
    <property type="protein sequence ID" value="BAC34232.1"/>
    <property type="molecule type" value="mRNA"/>
</dbReference>
<dbReference type="EMBL" id="AK163839">
    <property type="protein sequence ID" value="BAE37512.1"/>
    <property type="molecule type" value="mRNA"/>
</dbReference>
<dbReference type="EMBL" id="AK169128">
    <property type="protein sequence ID" value="BAE40907.1"/>
    <property type="molecule type" value="mRNA"/>
</dbReference>
<dbReference type="EMBL" id="BC005755">
    <property type="protein sequence ID" value="AAH05755.1"/>
    <property type="molecule type" value="mRNA"/>
</dbReference>
<dbReference type="CCDS" id="CCDS17715.1"/>
<dbReference type="RefSeq" id="NP_081708.1">
    <property type="nucleotide sequence ID" value="NM_027432.3"/>
</dbReference>
<dbReference type="SMR" id="Q99J09"/>
<dbReference type="BioGRID" id="214072">
    <property type="interactions" value="24"/>
</dbReference>
<dbReference type="ComplexPortal" id="CPX-1023">
    <property type="entry name" value="Methylosome"/>
</dbReference>
<dbReference type="FunCoup" id="Q99J09">
    <property type="interactions" value="2720"/>
</dbReference>
<dbReference type="IntAct" id="Q99J09">
    <property type="interactions" value="6"/>
</dbReference>
<dbReference type="MINT" id="Q99J09"/>
<dbReference type="STRING" id="10090.ENSMUSP00000010278"/>
<dbReference type="GlyGen" id="Q99J09">
    <property type="glycosylation" value="2 sites, 1 N-linked glycan (1 site), 1 O-linked glycan (1 site)"/>
</dbReference>
<dbReference type="iPTMnet" id="Q99J09"/>
<dbReference type="PhosphoSitePlus" id="Q99J09"/>
<dbReference type="SwissPalm" id="Q99J09"/>
<dbReference type="jPOST" id="Q99J09"/>
<dbReference type="PaxDb" id="10090-ENSMUSP00000010278"/>
<dbReference type="PeptideAtlas" id="Q99J09"/>
<dbReference type="ProteomicsDB" id="295543"/>
<dbReference type="Pumba" id="Q99J09"/>
<dbReference type="Antibodypedia" id="35257">
    <property type="antibodies" value="295 antibodies from 33 providers"/>
</dbReference>
<dbReference type="Ensembl" id="ENSMUST00000010278.12">
    <property type="protein sequence ID" value="ENSMUSP00000010278.6"/>
    <property type="gene ID" value="ENSMUSG00000000561.15"/>
</dbReference>
<dbReference type="GeneID" id="70465"/>
<dbReference type="KEGG" id="mmu:70465"/>
<dbReference type="UCSC" id="uc008qvo.1">
    <property type="organism name" value="mouse"/>
</dbReference>
<dbReference type="AGR" id="MGI:1917715"/>
<dbReference type="CTD" id="79084"/>
<dbReference type="MGI" id="MGI:1917715">
    <property type="gene designation" value="Wdr77"/>
</dbReference>
<dbReference type="VEuPathDB" id="HostDB:ENSMUSG00000000561"/>
<dbReference type="eggNOG" id="KOG0284">
    <property type="taxonomic scope" value="Eukaryota"/>
</dbReference>
<dbReference type="GeneTree" id="ENSGT00390000010711"/>
<dbReference type="HOGENOM" id="CLU_051285_0_0_1"/>
<dbReference type="InParanoid" id="Q99J09"/>
<dbReference type="OMA" id="QMGCNAS"/>
<dbReference type="OrthoDB" id="10260946at2759"/>
<dbReference type="PhylomeDB" id="Q99J09"/>
<dbReference type="TreeFam" id="TF325967"/>
<dbReference type="Reactome" id="R-MMU-191859">
    <property type="pathway name" value="snRNP Assembly"/>
</dbReference>
<dbReference type="Reactome" id="R-MMU-3214858">
    <property type="pathway name" value="RMTs methylate histone arginines"/>
</dbReference>
<dbReference type="BioGRID-ORCS" id="70465">
    <property type="hits" value="31 hits in 81 CRISPR screens"/>
</dbReference>
<dbReference type="ChiTaRS" id="Wdr77">
    <property type="organism name" value="mouse"/>
</dbReference>
<dbReference type="PRO" id="PR:Q99J09"/>
<dbReference type="Proteomes" id="UP000000589">
    <property type="component" value="Chromosome 3"/>
</dbReference>
<dbReference type="RNAct" id="Q99J09">
    <property type="molecule type" value="protein"/>
</dbReference>
<dbReference type="Bgee" id="ENSMUSG00000000561">
    <property type="expression patterns" value="Expressed in primitive streak and 273 other cell types or tissues"/>
</dbReference>
<dbReference type="ExpressionAtlas" id="Q99J09">
    <property type="expression patterns" value="baseline and differential"/>
</dbReference>
<dbReference type="GO" id="GO:0031465">
    <property type="term" value="C:Cul4B-RING E3 ubiquitin ligase complex"/>
    <property type="evidence" value="ECO:0000314"/>
    <property type="project" value="UniProtKB"/>
</dbReference>
<dbReference type="GO" id="GO:0005737">
    <property type="term" value="C:cytoplasm"/>
    <property type="evidence" value="ECO:0000250"/>
    <property type="project" value="UniProtKB"/>
</dbReference>
<dbReference type="GO" id="GO:0005829">
    <property type="term" value="C:cytosol"/>
    <property type="evidence" value="ECO:0000250"/>
    <property type="project" value="UniProtKB"/>
</dbReference>
<dbReference type="GO" id="GO:0005794">
    <property type="term" value="C:Golgi apparatus"/>
    <property type="evidence" value="ECO:0007669"/>
    <property type="project" value="Ensembl"/>
</dbReference>
<dbReference type="GO" id="GO:0034709">
    <property type="term" value="C:methylosome"/>
    <property type="evidence" value="ECO:0000250"/>
    <property type="project" value="UniProtKB"/>
</dbReference>
<dbReference type="GO" id="GO:0005654">
    <property type="term" value="C:nucleoplasm"/>
    <property type="evidence" value="ECO:0007669"/>
    <property type="project" value="Ensembl"/>
</dbReference>
<dbReference type="GO" id="GO:0005634">
    <property type="term" value="C:nucleus"/>
    <property type="evidence" value="ECO:0000250"/>
    <property type="project" value="UniProtKB"/>
</dbReference>
<dbReference type="GO" id="GO:0008327">
    <property type="term" value="F:methyl-CpG binding"/>
    <property type="evidence" value="ECO:0000250"/>
    <property type="project" value="UniProtKB"/>
</dbReference>
<dbReference type="GO" id="GO:0003713">
    <property type="term" value="F:transcription coactivator activity"/>
    <property type="evidence" value="ECO:0000266"/>
    <property type="project" value="MGI"/>
</dbReference>
<dbReference type="GO" id="GO:1990756">
    <property type="term" value="F:ubiquitin-like ligase-substrate adaptor activity"/>
    <property type="evidence" value="ECO:0000314"/>
    <property type="project" value="UniProtKB"/>
</dbReference>
<dbReference type="GO" id="GO:0060767">
    <property type="term" value="P:epithelial cell proliferation involved in prostate gland development"/>
    <property type="evidence" value="ECO:0000315"/>
    <property type="project" value="MGI"/>
</dbReference>
<dbReference type="GO" id="GO:0008285">
    <property type="term" value="P:negative regulation of cell population proliferation"/>
    <property type="evidence" value="ECO:0000316"/>
    <property type="project" value="MGI"/>
</dbReference>
<dbReference type="GO" id="GO:0060770">
    <property type="term" value="P:negative regulation of epithelial cell proliferation involved in prostate gland development"/>
    <property type="evidence" value="ECO:0000315"/>
    <property type="project" value="MGI"/>
</dbReference>
<dbReference type="GO" id="GO:0008284">
    <property type="term" value="P:positive regulation of cell population proliferation"/>
    <property type="evidence" value="ECO:0000316"/>
    <property type="project" value="MGI"/>
</dbReference>
<dbReference type="GO" id="GO:0048026">
    <property type="term" value="P:positive regulation of mRNA splicing, via spliceosome"/>
    <property type="evidence" value="ECO:0000303"/>
    <property type="project" value="ComplexPortal"/>
</dbReference>
<dbReference type="GO" id="GO:0000209">
    <property type="term" value="P:protein polyubiquitination"/>
    <property type="evidence" value="ECO:0000314"/>
    <property type="project" value="UniProtKB"/>
</dbReference>
<dbReference type="GO" id="GO:0006357">
    <property type="term" value="P:regulation of transcription by RNA polymerase II"/>
    <property type="evidence" value="ECO:0000315"/>
    <property type="project" value="MGI"/>
</dbReference>
<dbReference type="GO" id="GO:0060528">
    <property type="term" value="P:secretory columnal luminar epithelial cell differentiation involved in prostate glandular acinus development"/>
    <property type="evidence" value="ECO:0000315"/>
    <property type="project" value="MGI"/>
</dbReference>
<dbReference type="GO" id="GO:0000387">
    <property type="term" value="P:spliceosomal snRNP assembly"/>
    <property type="evidence" value="ECO:0000303"/>
    <property type="project" value="ComplexPortal"/>
</dbReference>
<dbReference type="GO" id="GO:0006511">
    <property type="term" value="P:ubiquitin-dependent protein catabolic process"/>
    <property type="evidence" value="ECO:0000314"/>
    <property type="project" value="UniProtKB"/>
</dbReference>
<dbReference type="FunFam" id="2.130.10.10:FF:000322">
    <property type="entry name" value="Methylosome protein 50"/>
    <property type="match status" value="1"/>
</dbReference>
<dbReference type="Gene3D" id="2.130.10.10">
    <property type="entry name" value="YVTN repeat-like/Quinoprotein amine dehydrogenase"/>
    <property type="match status" value="1"/>
</dbReference>
<dbReference type="InterPro" id="IPR052139">
    <property type="entry name" value="Methylosome_Comp_WDR77"/>
</dbReference>
<dbReference type="InterPro" id="IPR015943">
    <property type="entry name" value="WD40/YVTN_repeat-like_dom_sf"/>
</dbReference>
<dbReference type="InterPro" id="IPR019775">
    <property type="entry name" value="WD40_repeat_CS"/>
</dbReference>
<dbReference type="InterPro" id="IPR036322">
    <property type="entry name" value="WD40_repeat_dom_sf"/>
</dbReference>
<dbReference type="InterPro" id="IPR001680">
    <property type="entry name" value="WD40_rpt"/>
</dbReference>
<dbReference type="PANTHER" id="PTHR46853">
    <property type="entry name" value="METHYLOSOME PROTEIN 50"/>
    <property type="match status" value="1"/>
</dbReference>
<dbReference type="PANTHER" id="PTHR46853:SF3">
    <property type="entry name" value="METHYLOSOME PROTEIN WDR77"/>
    <property type="match status" value="1"/>
</dbReference>
<dbReference type="Pfam" id="PF00400">
    <property type="entry name" value="WD40"/>
    <property type="match status" value="2"/>
</dbReference>
<dbReference type="SMART" id="SM00320">
    <property type="entry name" value="WD40"/>
    <property type="match status" value="6"/>
</dbReference>
<dbReference type="SUPFAM" id="SSF50978">
    <property type="entry name" value="WD40 repeat-like"/>
    <property type="match status" value="1"/>
</dbReference>
<dbReference type="PROSITE" id="PS00678">
    <property type="entry name" value="WD_REPEATS_1"/>
    <property type="match status" value="1"/>
</dbReference>
<dbReference type="PROSITE" id="PS50082">
    <property type="entry name" value="WD_REPEATS_2"/>
    <property type="match status" value="2"/>
</dbReference>
<dbReference type="PROSITE" id="PS50294">
    <property type="entry name" value="WD_REPEATS_REGION"/>
    <property type="match status" value="1"/>
</dbReference>
<feature type="chain" id="PRO_0000051075" description="Methylosome protein WDR77">
    <location>
        <begin position="1"/>
        <end position="342"/>
    </location>
</feature>
<feature type="repeat" description="WD 1">
    <location>
        <begin position="22"/>
        <end position="75"/>
    </location>
</feature>
<feature type="repeat" description="WD 2">
    <location>
        <begin position="78"/>
        <end position="116"/>
    </location>
</feature>
<feature type="repeat" description="WD 3">
    <location>
        <begin position="123"/>
        <end position="162"/>
    </location>
</feature>
<feature type="repeat" description="WD 4">
    <location>
        <begin position="165"/>
        <end position="205"/>
    </location>
</feature>
<feature type="repeat" description="WD 5">
    <location>
        <begin position="209"/>
        <end position="250"/>
    </location>
</feature>
<feature type="repeat" description="WD 6">
    <location>
        <begin position="253"/>
        <end position="293"/>
    </location>
</feature>
<feature type="repeat" description="WD 7">
    <location>
        <begin position="295"/>
        <end position="330"/>
    </location>
</feature>
<feature type="modified residue" description="Phosphothreonine" evidence="7">
    <location>
        <position position="5"/>
    </location>
</feature>
<feature type="sequence conflict" description="In Ref. 2; AAH05755." evidence="5" ref="2">
    <original>SVPLLTSLSEDCSLAVLDS</original>
    <variation>RCCVSPGTWKGWVGTVVKE</variation>
    <location>
        <begin position="267"/>
        <end position="285"/>
    </location>
</feature>
<feature type="sequence conflict" description="In Ref. 2; AAH05755." evidence="5" ref="2">
    <location>
        <begin position="286"/>
        <end position="342"/>
    </location>
</feature>
<sequence length="342" mass="36943">MRKDTPPPLVPPAAREWNLPPNAPACMERQLEAARYRSDGSLLLGVSSLSGRCWVGSLWFFKDPSAAPNEGFCSAGVQTEAGVADLTWVGDKGILVASDSGAVELWELDENETLIVSKFCKYEHDDIVSTVTVLSSGTQAVSGSKDCCIKIWDLAQQVSLNSYRAHAGQVTCVAASPHKDSVFLSCSEDSRILLWDTRCPKPASQMACNASGYLPTALAWHPQQSEVFVFGDENGSVSLVDTKNASCTLSSAVHSQGVTRLVFSPHSVPLLTSLSEDCSLAVLDSSLSEVFRSRAHRDFVRDATWSPLNHSLLTTVGWDHQVIHHVVPLEPLPNPGPDSVVE</sequence>
<keyword id="KW-0963">Cytoplasm</keyword>
<keyword id="KW-0539">Nucleus</keyword>
<keyword id="KW-0597">Phosphoprotein</keyword>
<keyword id="KW-1185">Reference proteome</keyword>
<keyword id="KW-0677">Repeat</keyword>
<keyword id="KW-0833">Ubl conjugation pathway</keyword>
<keyword id="KW-0853">WD repeat</keyword>
<gene>
    <name evidence="6" type="primary">Wdr77</name>
    <name evidence="6" type="synonym">Mep50</name>
</gene>
<proteinExistence type="evidence at protein level"/>
<accession>Q99J09</accession>
<accession>Q3TFJ1</accession>
<accession>Q8BSH8</accession>
<accession>Q9CZY5</accession>
<protein>
    <recommendedName>
        <fullName evidence="5">Methylosome protein WDR77</fullName>
    </recommendedName>
    <alternativeName>
        <fullName evidence="1">Methylosome protein 50</fullName>
        <shortName evidence="1">MEP-50</shortName>
    </alternativeName>
    <alternativeName>
        <fullName evidence="6">WD repeat-containing protein 77</fullName>
    </alternativeName>
</protein>
<organism>
    <name type="scientific">Mus musculus</name>
    <name type="common">Mouse</name>
    <dbReference type="NCBI Taxonomy" id="10090"/>
    <lineage>
        <taxon>Eukaryota</taxon>
        <taxon>Metazoa</taxon>
        <taxon>Chordata</taxon>
        <taxon>Craniata</taxon>
        <taxon>Vertebrata</taxon>
        <taxon>Euteleostomi</taxon>
        <taxon>Mammalia</taxon>
        <taxon>Eutheria</taxon>
        <taxon>Euarchontoglires</taxon>
        <taxon>Glires</taxon>
        <taxon>Rodentia</taxon>
        <taxon>Myomorpha</taxon>
        <taxon>Muroidea</taxon>
        <taxon>Muridae</taxon>
        <taxon>Murinae</taxon>
        <taxon>Mus</taxon>
        <taxon>Mus</taxon>
    </lineage>
</organism>
<reference key="1">
    <citation type="journal article" date="2005" name="Science">
        <title>The transcriptional landscape of the mammalian genome.</title>
        <authorList>
            <person name="Carninci P."/>
            <person name="Kasukawa T."/>
            <person name="Katayama S."/>
            <person name="Gough J."/>
            <person name="Frith M.C."/>
            <person name="Maeda N."/>
            <person name="Oyama R."/>
            <person name="Ravasi T."/>
            <person name="Lenhard B."/>
            <person name="Wells C."/>
            <person name="Kodzius R."/>
            <person name="Shimokawa K."/>
            <person name="Bajic V.B."/>
            <person name="Brenner S.E."/>
            <person name="Batalov S."/>
            <person name="Forrest A.R."/>
            <person name="Zavolan M."/>
            <person name="Davis M.J."/>
            <person name="Wilming L.G."/>
            <person name="Aidinis V."/>
            <person name="Allen J.E."/>
            <person name="Ambesi-Impiombato A."/>
            <person name="Apweiler R."/>
            <person name="Aturaliya R.N."/>
            <person name="Bailey T.L."/>
            <person name="Bansal M."/>
            <person name="Baxter L."/>
            <person name="Beisel K.W."/>
            <person name="Bersano T."/>
            <person name="Bono H."/>
            <person name="Chalk A.M."/>
            <person name="Chiu K.P."/>
            <person name="Choudhary V."/>
            <person name="Christoffels A."/>
            <person name="Clutterbuck D.R."/>
            <person name="Crowe M.L."/>
            <person name="Dalla E."/>
            <person name="Dalrymple B.P."/>
            <person name="de Bono B."/>
            <person name="Della Gatta G."/>
            <person name="di Bernardo D."/>
            <person name="Down T."/>
            <person name="Engstrom P."/>
            <person name="Fagiolini M."/>
            <person name="Faulkner G."/>
            <person name="Fletcher C.F."/>
            <person name="Fukushima T."/>
            <person name="Furuno M."/>
            <person name="Futaki S."/>
            <person name="Gariboldi M."/>
            <person name="Georgii-Hemming P."/>
            <person name="Gingeras T.R."/>
            <person name="Gojobori T."/>
            <person name="Green R.E."/>
            <person name="Gustincich S."/>
            <person name="Harbers M."/>
            <person name="Hayashi Y."/>
            <person name="Hensch T.K."/>
            <person name="Hirokawa N."/>
            <person name="Hill D."/>
            <person name="Huminiecki L."/>
            <person name="Iacono M."/>
            <person name="Ikeo K."/>
            <person name="Iwama A."/>
            <person name="Ishikawa T."/>
            <person name="Jakt M."/>
            <person name="Kanapin A."/>
            <person name="Katoh M."/>
            <person name="Kawasawa Y."/>
            <person name="Kelso J."/>
            <person name="Kitamura H."/>
            <person name="Kitano H."/>
            <person name="Kollias G."/>
            <person name="Krishnan S.P."/>
            <person name="Kruger A."/>
            <person name="Kummerfeld S.K."/>
            <person name="Kurochkin I.V."/>
            <person name="Lareau L.F."/>
            <person name="Lazarevic D."/>
            <person name="Lipovich L."/>
            <person name="Liu J."/>
            <person name="Liuni S."/>
            <person name="McWilliam S."/>
            <person name="Madan Babu M."/>
            <person name="Madera M."/>
            <person name="Marchionni L."/>
            <person name="Matsuda H."/>
            <person name="Matsuzawa S."/>
            <person name="Miki H."/>
            <person name="Mignone F."/>
            <person name="Miyake S."/>
            <person name="Morris K."/>
            <person name="Mottagui-Tabar S."/>
            <person name="Mulder N."/>
            <person name="Nakano N."/>
            <person name="Nakauchi H."/>
            <person name="Ng P."/>
            <person name="Nilsson R."/>
            <person name="Nishiguchi S."/>
            <person name="Nishikawa S."/>
            <person name="Nori F."/>
            <person name="Ohara O."/>
            <person name="Okazaki Y."/>
            <person name="Orlando V."/>
            <person name="Pang K.C."/>
            <person name="Pavan W.J."/>
            <person name="Pavesi G."/>
            <person name="Pesole G."/>
            <person name="Petrovsky N."/>
            <person name="Piazza S."/>
            <person name="Reed J."/>
            <person name="Reid J.F."/>
            <person name="Ring B.Z."/>
            <person name="Ringwald M."/>
            <person name="Rost B."/>
            <person name="Ruan Y."/>
            <person name="Salzberg S.L."/>
            <person name="Sandelin A."/>
            <person name="Schneider C."/>
            <person name="Schoenbach C."/>
            <person name="Sekiguchi K."/>
            <person name="Semple C.A."/>
            <person name="Seno S."/>
            <person name="Sessa L."/>
            <person name="Sheng Y."/>
            <person name="Shibata Y."/>
            <person name="Shimada H."/>
            <person name="Shimada K."/>
            <person name="Silva D."/>
            <person name="Sinclair B."/>
            <person name="Sperling S."/>
            <person name="Stupka E."/>
            <person name="Sugiura K."/>
            <person name="Sultana R."/>
            <person name="Takenaka Y."/>
            <person name="Taki K."/>
            <person name="Tammoja K."/>
            <person name="Tan S.L."/>
            <person name="Tang S."/>
            <person name="Taylor M.S."/>
            <person name="Tegner J."/>
            <person name="Teichmann S.A."/>
            <person name="Ueda H.R."/>
            <person name="van Nimwegen E."/>
            <person name="Verardo R."/>
            <person name="Wei C.L."/>
            <person name="Yagi K."/>
            <person name="Yamanishi H."/>
            <person name="Zabarovsky E."/>
            <person name="Zhu S."/>
            <person name="Zimmer A."/>
            <person name="Hide W."/>
            <person name="Bult C."/>
            <person name="Grimmond S.M."/>
            <person name="Teasdale R.D."/>
            <person name="Liu E.T."/>
            <person name="Brusic V."/>
            <person name="Quackenbush J."/>
            <person name="Wahlestedt C."/>
            <person name="Mattick J.S."/>
            <person name="Hume D.A."/>
            <person name="Kai C."/>
            <person name="Sasaki D."/>
            <person name="Tomaru Y."/>
            <person name="Fukuda S."/>
            <person name="Kanamori-Katayama M."/>
            <person name="Suzuki M."/>
            <person name="Aoki J."/>
            <person name="Arakawa T."/>
            <person name="Iida J."/>
            <person name="Imamura K."/>
            <person name="Itoh M."/>
            <person name="Kato T."/>
            <person name="Kawaji H."/>
            <person name="Kawagashira N."/>
            <person name="Kawashima T."/>
            <person name="Kojima M."/>
            <person name="Kondo S."/>
            <person name="Konno H."/>
            <person name="Nakano K."/>
            <person name="Ninomiya N."/>
            <person name="Nishio T."/>
            <person name="Okada M."/>
            <person name="Plessy C."/>
            <person name="Shibata K."/>
            <person name="Shiraki T."/>
            <person name="Suzuki S."/>
            <person name="Tagami M."/>
            <person name="Waki K."/>
            <person name="Watahiki A."/>
            <person name="Okamura-Oho Y."/>
            <person name="Suzuki H."/>
            <person name="Kawai J."/>
            <person name="Hayashizaki Y."/>
        </authorList>
    </citation>
    <scope>NUCLEOTIDE SEQUENCE [LARGE SCALE MRNA]</scope>
    <source>
        <strain>C57BL/6J</strain>
        <tissue>Amnion</tissue>
        <tissue>Embryo</tissue>
        <tissue>Head</tissue>
        <tissue>Liver</tissue>
        <tissue>Mesonephros</tissue>
    </source>
</reference>
<reference key="2">
    <citation type="journal article" date="2004" name="Genome Res.">
        <title>The status, quality, and expansion of the NIH full-length cDNA project: the Mammalian Gene Collection (MGC).</title>
        <authorList>
            <consortium name="The MGC Project Team"/>
        </authorList>
    </citation>
    <scope>NUCLEOTIDE SEQUENCE [LARGE SCALE MRNA]</scope>
    <source>
        <tissue>Mammary tumor</tissue>
    </source>
</reference>
<reference key="3">
    <citation type="journal article" date="2006" name="Biochem. Biophys. Res. Commun.">
        <title>Association of Polycomb group SUZ12 with WD-repeat protein MEP50 that binds to histone H2A selectively in vitro.</title>
        <authorList>
            <person name="Furuno K."/>
            <person name="Masatsugu T."/>
            <person name="Sonoda M."/>
            <person name="Sasazuki T."/>
            <person name="Yamamoto K."/>
        </authorList>
    </citation>
    <scope>INTERACTION WITH SUZ12</scope>
</reference>
<reference key="4">
    <citation type="journal article" date="2009" name="Genes Dev.">
        <title>Proteomic analysis of murine Piwi proteins reveals a role for arginine methylation in specifying interaction with Tudor family members.</title>
        <authorList>
            <person name="Vagin V.V."/>
            <person name="Wohlschlegel J."/>
            <person name="Qu J."/>
            <person name="Jonsson Z."/>
            <person name="Huang X."/>
            <person name="Chuma S."/>
            <person name="Girard A."/>
            <person name="Sachidanandam R."/>
            <person name="Hannon G.J."/>
            <person name="Aravin A.A."/>
        </authorList>
    </citation>
    <scope>FUNCTION IN METHYLATION OF PIWI PROTEINS</scope>
</reference>
<reference key="5">
    <citation type="journal article" date="2010" name="Cell">
        <title>A tissue-specific atlas of mouse protein phosphorylation and expression.</title>
        <authorList>
            <person name="Huttlin E.L."/>
            <person name="Jedrychowski M.P."/>
            <person name="Elias J.E."/>
            <person name="Goswami T."/>
            <person name="Rad R."/>
            <person name="Beausoleil S.A."/>
            <person name="Villen J."/>
            <person name="Haas W."/>
            <person name="Sowa M.E."/>
            <person name="Gygi S.P."/>
        </authorList>
    </citation>
    <scope>PHOSPHORYLATION [LARGE SCALE ANALYSIS] AT THR-5</scope>
    <scope>IDENTIFICATION BY MASS SPECTROMETRY [LARGE SCALE ANALYSIS]</scope>
    <source>
        <tissue>Brain</tissue>
        <tissue>Brown adipose tissue</tissue>
        <tissue>Heart</tissue>
        <tissue>Kidney</tissue>
        <tissue>Liver</tissue>
        <tissue>Lung</tissue>
        <tissue>Pancreas</tissue>
        <tissue>Spleen</tissue>
        <tissue>Testis</tissue>
    </source>
</reference>
<reference key="6">
    <citation type="journal article" date="2022" name="Cell Death Differ.">
        <title>Cullin 4b-RING ubiquitin ligase targets IRGM1 to regulate Wnt signaling and intestinal homeostasis.</title>
        <authorList>
            <person name="Fan Y."/>
            <person name="Huo X."/>
            <person name="Guo B."/>
            <person name="Zhang X."/>
            <person name="Yang Y."/>
            <person name="Lian J."/>
            <person name="Meng X."/>
            <person name="Shao Y."/>
            <person name="Zou Y."/>
            <person name="Guo H."/>
            <person name="Wang H."/>
            <person name="Sun G."/>
            <person name="Dou H."/>
            <person name="Wang J."/>
            <person name="Shao C."/>
            <person name="Gong Y."/>
            <person name="Hu H."/>
        </authorList>
    </citation>
    <scope>FUNCTION</scope>
    <scope>PATHWAY</scope>
    <scope>IDENTIFICATION IN THE DCX(WDR77) COMPLEX</scope>
</reference>
<evidence type="ECO:0000250" key="1">
    <source>
        <dbReference type="UniProtKB" id="Q9BQA1"/>
    </source>
</evidence>
<evidence type="ECO:0000269" key="2">
    <source>
    </source>
</evidence>
<evidence type="ECO:0000269" key="3">
    <source>
    </source>
</evidence>
<evidence type="ECO:0000269" key="4">
    <source>
    </source>
</evidence>
<evidence type="ECO:0000305" key="5"/>
<evidence type="ECO:0000312" key="6">
    <source>
        <dbReference type="MGI" id="MGI:1917715"/>
    </source>
</evidence>
<evidence type="ECO:0007744" key="7">
    <source>
    </source>
</evidence>
<name>MEP50_MOUSE</name>
<comment type="function">
    <text evidence="1 3">Non-catalytic component of the methylosome complex, composed of PRMT5, WDR77 and CLNS1A, which modifies specific arginines to dimethylarginines in several spliceosomal Sm proteins and histones (By similarity). This modification targets Sm proteins to the survival of motor neurons (SMN) complex for assembly into small nuclear ribonucleoprotein core particles (By similarity). Might play a role in transcription regulation (By similarity). The methylosome complex also methylates the Piwi proteins (PIWIL1, PIWIL2 and PIWIL4), methylation of Piwi proteins being required for the interaction with Tudor domain-containing proteins and subsequent localization to the meiotic nuage (PubMed:19584108).</text>
</comment>
<comment type="function">
    <text evidence="4">Substrate-recognition component of the DCX(WDR77) complex, which mediates ubiquitination and degradation of Irgm1 in intestinal cells.</text>
</comment>
<comment type="subunit">
    <text evidence="1 2 4">Component of the methylosome complex composed of PRMT5, WDR77 and CLNS1A (By similarity). Found in a complex composed of PRMT5, WDR77 and RIOK1 (By similarity). RIOK1 and CLNS1A bound directly to PRMT5 at the same binding site, in a mutually exclusive manner, which allows the recruitment of distinct methylation substrates, such as nucleolin/NCL and Sm proteins, respectively (By similarity). Found in a complex with the component of the methylosome, PRMT5, CLNS1A, WDR77, PRMT1 and ERH (By similarity). Directly interacts with PRMT5, as well as with several Sm proteins, including SNRPB and SNRPD2 and, more weakly, SNRPD3 and SNRPE (By similarity). Forms a compact hetero-octamer with PRMT5, decorating the outer surface of a PRMT5 tetramer (By similarity). Interacts with SUZ12 and histone H2A/H2AC20, but not with histones H2B, H3 nor H4 (PubMed:16712789). Interacts with CTDP1 and LSM11 (By similarity). Interacts with APEX1, AR and NKX3-1 (By similarity). Interacts with CHTOP (By similarity). Interacts with FAM47E (By similarity). Component of the DCX(WDR77) complex, composed of Cul4b, Ddb1, Wdr77 and Rbx1 (PubMed:35197566). Interacts with TSC22D2 (By similarity).</text>
</comment>
<comment type="subcellular location">
    <subcellularLocation>
        <location evidence="1">Nucleus</location>
    </subcellularLocation>
    <subcellularLocation>
        <location evidence="1">Cytoplasm</location>
    </subcellularLocation>
</comment>